<protein>
    <recommendedName>
        <fullName evidence="1">Lipoyl synthase</fullName>
        <ecNumber evidence="1">2.8.1.8</ecNumber>
    </recommendedName>
    <alternativeName>
        <fullName evidence="1">Lip-syn</fullName>
        <shortName evidence="1">LS</shortName>
    </alternativeName>
    <alternativeName>
        <fullName evidence="1">Lipoate synthase</fullName>
    </alternativeName>
    <alternativeName>
        <fullName evidence="1">Lipoic acid synthase</fullName>
    </alternativeName>
    <alternativeName>
        <fullName evidence="1">Sulfur insertion protein LipA</fullName>
    </alternativeName>
</protein>
<evidence type="ECO:0000255" key="1">
    <source>
        <dbReference type="HAMAP-Rule" id="MF_00206"/>
    </source>
</evidence>
<evidence type="ECO:0000255" key="2">
    <source>
        <dbReference type="PROSITE-ProRule" id="PRU01266"/>
    </source>
</evidence>
<name>LIPA_LEPIC</name>
<feature type="chain" id="PRO_0000102322" description="Lipoyl synthase">
    <location>
        <begin position="1"/>
        <end position="301"/>
    </location>
</feature>
<feature type="domain" description="Radical SAM core" evidence="2">
    <location>
        <begin position="65"/>
        <end position="279"/>
    </location>
</feature>
<feature type="binding site" evidence="1">
    <location>
        <position position="53"/>
    </location>
    <ligand>
        <name>[4Fe-4S] cluster</name>
        <dbReference type="ChEBI" id="CHEBI:49883"/>
        <label>1</label>
    </ligand>
</feature>
<feature type="binding site" evidence="1">
    <location>
        <position position="58"/>
    </location>
    <ligand>
        <name>[4Fe-4S] cluster</name>
        <dbReference type="ChEBI" id="CHEBI:49883"/>
        <label>1</label>
    </ligand>
</feature>
<feature type="binding site" evidence="1">
    <location>
        <position position="64"/>
    </location>
    <ligand>
        <name>[4Fe-4S] cluster</name>
        <dbReference type="ChEBI" id="CHEBI:49883"/>
        <label>1</label>
    </ligand>
</feature>
<feature type="binding site" evidence="1">
    <location>
        <position position="79"/>
    </location>
    <ligand>
        <name>[4Fe-4S] cluster</name>
        <dbReference type="ChEBI" id="CHEBI:49883"/>
        <label>2</label>
        <note>4Fe-4S-S-AdoMet</note>
    </ligand>
</feature>
<feature type="binding site" evidence="1">
    <location>
        <position position="83"/>
    </location>
    <ligand>
        <name>[4Fe-4S] cluster</name>
        <dbReference type="ChEBI" id="CHEBI:49883"/>
        <label>2</label>
        <note>4Fe-4S-S-AdoMet</note>
    </ligand>
</feature>
<feature type="binding site" evidence="1">
    <location>
        <position position="86"/>
    </location>
    <ligand>
        <name>[4Fe-4S] cluster</name>
        <dbReference type="ChEBI" id="CHEBI:49883"/>
        <label>2</label>
        <note>4Fe-4S-S-AdoMet</note>
    </ligand>
</feature>
<feature type="binding site" evidence="1">
    <location>
        <position position="290"/>
    </location>
    <ligand>
        <name>[4Fe-4S] cluster</name>
        <dbReference type="ChEBI" id="CHEBI:49883"/>
        <label>1</label>
    </ligand>
</feature>
<dbReference type="EC" id="2.8.1.8" evidence="1"/>
<dbReference type="EMBL" id="AE016823">
    <property type="protein sequence ID" value="AAS70241.1"/>
    <property type="molecule type" value="Genomic_DNA"/>
</dbReference>
<dbReference type="RefSeq" id="WP_001068719.1">
    <property type="nucleotide sequence ID" value="NC_005823.1"/>
</dbReference>
<dbReference type="SMR" id="Q72RU2"/>
<dbReference type="GeneID" id="61141549"/>
<dbReference type="KEGG" id="lic:LIC_11646"/>
<dbReference type="HOGENOM" id="CLU_033144_2_1_12"/>
<dbReference type="UniPathway" id="UPA00538">
    <property type="reaction ID" value="UER00593"/>
</dbReference>
<dbReference type="Proteomes" id="UP000007037">
    <property type="component" value="Chromosome I"/>
</dbReference>
<dbReference type="GO" id="GO:0005737">
    <property type="term" value="C:cytoplasm"/>
    <property type="evidence" value="ECO:0007669"/>
    <property type="project" value="UniProtKB-SubCell"/>
</dbReference>
<dbReference type="GO" id="GO:0051539">
    <property type="term" value="F:4 iron, 4 sulfur cluster binding"/>
    <property type="evidence" value="ECO:0007669"/>
    <property type="project" value="UniProtKB-UniRule"/>
</dbReference>
<dbReference type="GO" id="GO:0016992">
    <property type="term" value="F:lipoate synthase activity"/>
    <property type="evidence" value="ECO:0007669"/>
    <property type="project" value="UniProtKB-UniRule"/>
</dbReference>
<dbReference type="GO" id="GO:0046872">
    <property type="term" value="F:metal ion binding"/>
    <property type="evidence" value="ECO:0007669"/>
    <property type="project" value="UniProtKB-KW"/>
</dbReference>
<dbReference type="CDD" id="cd01335">
    <property type="entry name" value="Radical_SAM"/>
    <property type="match status" value="1"/>
</dbReference>
<dbReference type="FunFam" id="3.20.20.70:FF:000186">
    <property type="entry name" value="Lipoyl synthase"/>
    <property type="match status" value="1"/>
</dbReference>
<dbReference type="Gene3D" id="3.20.20.70">
    <property type="entry name" value="Aldolase class I"/>
    <property type="match status" value="1"/>
</dbReference>
<dbReference type="HAMAP" id="MF_00206">
    <property type="entry name" value="Lipoyl_synth"/>
    <property type="match status" value="1"/>
</dbReference>
<dbReference type="InterPro" id="IPR013785">
    <property type="entry name" value="Aldolase_TIM"/>
</dbReference>
<dbReference type="InterPro" id="IPR006638">
    <property type="entry name" value="Elp3/MiaA/NifB-like_rSAM"/>
</dbReference>
<dbReference type="InterPro" id="IPR003698">
    <property type="entry name" value="Lipoyl_synth"/>
</dbReference>
<dbReference type="InterPro" id="IPR007197">
    <property type="entry name" value="rSAM"/>
</dbReference>
<dbReference type="NCBIfam" id="TIGR00510">
    <property type="entry name" value="lipA"/>
    <property type="match status" value="1"/>
</dbReference>
<dbReference type="NCBIfam" id="NF004019">
    <property type="entry name" value="PRK05481.1"/>
    <property type="match status" value="1"/>
</dbReference>
<dbReference type="NCBIfam" id="NF009544">
    <property type="entry name" value="PRK12928.1"/>
    <property type="match status" value="1"/>
</dbReference>
<dbReference type="PANTHER" id="PTHR10949">
    <property type="entry name" value="LIPOYL SYNTHASE"/>
    <property type="match status" value="1"/>
</dbReference>
<dbReference type="PANTHER" id="PTHR10949:SF0">
    <property type="entry name" value="LIPOYL SYNTHASE, MITOCHONDRIAL"/>
    <property type="match status" value="1"/>
</dbReference>
<dbReference type="Pfam" id="PF04055">
    <property type="entry name" value="Radical_SAM"/>
    <property type="match status" value="1"/>
</dbReference>
<dbReference type="PIRSF" id="PIRSF005963">
    <property type="entry name" value="Lipoyl_synth"/>
    <property type="match status" value="1"/>
</dbReference>
<dbReference type="SFLD" id="SFLDF00271">
    <property type="entry name" value="lipoyl_synthase"/>
    <property type="match status" value="1"/>
</dbReference>
<dbReference type="SFLD" id="SFLDG01058">
    <property type="entry name" value="lipoyl_synthase_like"/>
    <property type="match status" value="1"/>
</dbReference>
<dbReference type="SMART" id="SM00729">
    <property type="entry name" value="Elp3"/>
    <property type="match status" value="1"/>
</dbReference>
<dbReference type="SUPFAM" id="SSF102114">
    <property type="entry name" value="Radical SAM enzymes"/>
    <property type="match status" value="1"/>
</dbReference>
<dbReference type="PROSITE" id="PS51918">
    <property type="entry name" value="RADICAL_SAM"/>
    <property type="match status" value="1"/>
</dbReference>
<accession>Q72RU2</accession>
<comment type="function">
    <text evidence="1">Catalyzes the radical-mediated insertion of two sulfur atoms into the C-6 and C-8 positions of the octanoyl moiety bound to the lipoyl domains of lipoate-dependent enzymes, thereby converting the octanoylated domains into lipoylated derivatives.</text>
</comment>
<comment type="catalytic activity">
    <reaction evidence="1">
        <text>[[Fe-S] cluster scaffold protein carrying a second [4Fe-4S](2+) cluster] + N(6)-octanoyl-L-lysyl-[protein] + 2 oxidized [2Fe-2S]-[ferredoxin] + 2 S-adenosyl-L-methionine + 4 H(+) = [[Fe-S] cluster scaffold protein] + N(6)-[(R)-dihydrolipoyl]-L-lysyl-[protein] + 4 Fe(3+) + 2 hydrogen sulfide + 2 5'-deoxyadenosine + 2 L-methionine + 2 reduced [2Fe-2S]-[ferredoxin]</text>
        <dbReference type="Rhea" id="RHEA:16585"/>
        <dbReference type="Rhea" id="RHEA-COMP:9928"/>
        <dbReference type="Rhea" id="RHEA-COMP:10000"/>
        <dbReference type="Rhea" id="RHEA-COMP:10001"/>
        <dbReference type="Rhea" id="RHEA-COMP:10475"/>
        <dbReference type="Rhea" id="RHEA-COMP:14568"/>
        <dbReference type="Rhea" id="RHEA-COMP:14569"/>
        <dbReference type="ChEBI" id="CHEBI:15378"/>
        <dbReference type="ChEBI" id="CHEBI:17319"/>
        <dbReference type="ChEBI" id="CHEBI:29034"/>
        <dbReference type="ChEBI" id="CHEBI:29919"/>
        <dbReference type="ChEBI" id="CHEBI:33722"/>
        <dbReference type="ChEBI" id="CHEBI:33737"/>
        <dbReference type="ChEBI" id="CHEBI:33738"/>
        <dbReference type="ChEBI" id="CHEBI:57844"/>
        <dbReference type="ChEBI" id="CHEBI:59789"/>
        <dbReference type="ChEBI" id="CHEBI:78809"/>
        <dbReference type="ChEBI" id="CHEBI:83100"/>
        <dbReference type="EC" id="2.8.1.8"/>
    </reaction>
</comment>
<comment type="cofactor">
    <cofactor evidence="1">
        <name>[4Fe-4S] cluster</name>
        <dbReference type="ChEBI" id="CHEBI:49883"/>
    </cofactor>
    <text evidence="1">Binds 2 [4Fe-4S] clusters per subunit. One cluster is coordinated with 3 cysteines and an exchangeable S-adenosyl-L-methionine.</text>
</comment>
<comment type="pathway">
    <text evidence="1">Protein modification; protein lipoylation via endogenous pathway; protein N(6)-(lipoyl)lysine from octanoyl-[acyl-carrier-protein]: step 2/2.</text>
</comment>
<comment type="subcellular location">
    <subcellularLocation>
        <location evidence="1">Cytoplasm</location>
    </subcellularLocation>
</comment>
<comment type="similarity">
    <text evidence="1">Belongs to the radical SAM superfamily. Lipoyl synthase family.</text>
</comment>
<organism>
    <name type="scientific">Leptospira interrogans serogroup Icterohaemorrhagiae serovar copenhageni (strain Fiocruz L1-130)</name>
    <dbReference type="NCBI Taxonomy" id="267671"/>
    <lineage>
        <taxon>Bacteria</taxon>
        <taxon>Pseudomonadati</taxon>
        <taxon>Spirochaetota</taxon>
        <taxon>Spirochaetia</taxon>
        <taxon>Leptospirales</taxon>
        <taxon>Leptospiraceae</taxon>
        <taxon>Leptospira</taxon>
    </lineage>
</organism>
<gene>
    <name evidence="1" type="primary">lipA</name>
    <name type="ordered locus">LIC_11646</name>
</gene>
<keyword id="KW-0004">4Fe-4S</keyword>
<keyword id="KW-0963">Cytoplasm</keyword>
<keyword id="KW-0408">Iron</keyword>
<keyword id="KW-0411">Iron-sulfur</keyword>
<keyword id="KW-0479">Metal-binding</keyword>
<keyword id="KW-0949">S-adenosyl-L-methionine</keyword>
<keyword id="KW-0808">Transferase</keyword>
<proteinExistence type="inferred from homology"/>
<reference key="1">
    <citation type="journal article" date="2004" name="J. Bacteriol.">
        <title>Comparative genomics of two Leptospira interrogans serovars reveals novel insights into physiology and pathogenesis.</title>
        <authorList>
            <person name="Nascimento A.L.T.O."/>
            <person name="Ko A.I."/>
            <person name="Martins E.A.L."/>
            <person name="Monteiro-Vitorello C.B."/>
            <person name="Ho P.L."/>
            <person name="Haake D.A."/>
            <person name="Verjovski-Almeida S."/>
            <person name="Hartskeerl R.A."/>
            <person name="Marques M.V."/>
            <person name="Oliveira M.C."/>
            <person name="Menck C.F.M."/>
            <person name="Leite L.C.C."/>
            <person name="Carrer H."/>
            <person name="Coutinho L.L."/>
            <person name="Degrave W.M."/>
            <person name="Dellagostin O.A."/>
            <person name="El-Dorry H."/>
            <person name="Ferro E.S."/>
            <person name="Ferro M.I.T."/>
            <person name="Furlan L.R."/>
            <person name="Gamberini M."/>
            <person name="Giglioti E.A."/>
            <person name="Goes-Neto A."/>
            <person name="Goldman G.H."/>
            <person name="Goldman M.H.S."/>
            <person name="Harakava R."/>
            <person name="Jeronimo S.M.B."/>
            <person name="Junqueira-de-Azevedo I.L.M."/>
            <person name="Kimura E.T."/>
            <person name="Kuramae E.E."/>
            <person name="Lemos E.G.M."/>
            <person name="Lemos M.V.F."/>
            <person name="Marino C.L."/>
            <person name="Nunes L.R."/>
            <person name="de Oliveira R.C."/>
            <person name="Pereira G.G."/>
            <person name="Reis M.S."/>
            <person name="Schriefer A."/>
            <person name="Siqueira W.J."/>
            <person name="Sommer P."/>
            <person name="Tsai S.M."/>
            <person name="Simpson A.J.G."/>
            <person name="Ferro J.A."/>
            <person name="Camargo L.E.A."/>
            <person name="Kitajima J.P."/>
            <person name="Setubal J.C."/>
            <person name="Van Sluys M.A."/>
        </authorList>
    </citation>
    <scope>NUCLEOTIDE SEQUENCE [LARGE SCALE GENOMIC DNA]</scope>
    <source>
        <strain>Fiocruz L1-130</strain>
    </source>
</reference>
<sequence length="301" mass="33666">MNPLKKKPRTHSLQNAPEKPDWLKVKLAFPDPKNNPVAIVRNSLEEKKLNTVCESASCPNLNHCWSRKTATYMLGGDICTRRCSYCDVASGKPFPLDPEEPKRIAESSIALGLRHVVITSVNRDDLEDGGAAHFAKTVKEIRKGLPDCKIELLIPDLKVKQEALEIIFECNPDIFNHNLETVKRLFPEVAPQKRYERSLDVLKIASARGFLTKSGLILGMGETLEEVKECMQDLASVGVSLLTLGQYLQPTSTHLPVKEYVVPQVFKDLRIYGKSIGFKGVFSGPLVRSSYHADEQISWNP</sequence>